<gene>
    <name type="primary">hisI</name>
    <name type="synonym">hisIE</name>
    <name type="ordered locus">LL1215</name>
    <name type="ORF">L0072</name>
</gene>
<feature type="chain" id="PRO_0000136418" description="Histidine biosynthesis bifunctional protein HisIE">
    <location>
        <begin position="1"/>
        <end position="212"/>
    </location>
</feature>
<feature type="region of interest" description="Phosphoribosyl-AMP cyclohydrolase">
    <location>
        <begin position="1"/>
        <end position="109"/>
    </location>
</feature>
<feature type="region of interest" description="Phosphoribosyl-ATP pyrophosphohydrolase">
    <location>
        <begin position="110"/>
        <end position="212"/>
    </location>
</feature>
<feature type="sequence conflict" description="In Ref. 1; AAB81910." evidence="2" ref="1">
    <original>T</original>
    <variation>A</variation>
    <location>
        <position position="93"/>
    </location>
</feature>
<feature type="sequence conflict" description="In Ref. 1; AAB81910." evidence="2" ref="1">
    <original>I</original>
    <variation>T</variation>
    <location>
        <position position="153"/>
    </location>
</feature>
<sequence>MRPDFHKQELIPVIVQDYQTNQVLMLAYTNEVAFEKMLETGETWFWSRSRQKLWHKGEESGHFQKIKGMRLDCDQDTLLVFVEQIGNACHTGTYSCFYDELIPFDDSDIFSELEKQIIDRKLHPVEKSYTNYLLGEGIDKVLKKVGEEASEVIIASKNSDKGELLGEIDDLLYHLFVLMNQQGISLEEVRQKAKERHQLEGNKKEFHTRTAD</sequence>
<accession>Q02130</accession>
<accession>Q9CG90</accession>
<reference key="1">
    <citation type="journal article" date="1992" name="J. Bacteriol.">
        <title>Histidine biosynthesis genes in Lactococcus lactis subsp. lactis.</title>
        <authorList>
            <person name="Delorme C."/>
            <person name="Ehrlich S.D."/>
            <person name="Renault P."/>
        </authorList>
    </citation>
    <scope>NUCLEOTIDE SEQUENCE [GENOMIC DNA]</scope>
    <source>
        <strain>NCDO 2118</strain>
    </source>
</reference>
<reference key="2">
    <citation type="journal article" date="2001" name="Genome Res.">
        <title>The complete genome sequence of the lactic acid bacterium Lactococcus lactis ssp. lactis IL1403.</title>
        <authorList>
            <person name="Bolotin A."/>
            <person name="Wincker P."/>
            <person name="Mauger S."/>
            <person name="Jaillon O."/>
            <person name="Malarme K."/>
            <person name="Weissenbach J."/>
            <person name="Ehrlich S.D."/>
            <person name="Sorokin A."/>
        </authorList>
    </citation>
    <scope>NUCLEOTIDE SEQUENCE [LARGE SCALE GENOMIC DNA]</scope>
    <source>
        <strain>IL1403</strain>
    </source>
</reference>
<name>HIS2_LACLA</name>
<keyword id="KW-0028">Amino-acid biosynthesis</keyword>
<keyword id="KW-0067">ATP-binding</keyword>
<keyword id="KW-0963">Cytoplasm</keyword>
<keyword id="KW-0368">Histidine biosynthesis</keyword>
<keyword id="KW-0378">Hydrolase</keyword>
<keyword id="KW-0511">Multifunctional enzyme</keyword>
<keyword id="KW-0547">Nucleotide-binding</keyword>
<keyword id="KW-1185">Reference proteome</keyword>
<organism>
    <name type="scientific">Lactococcus lactis subsp. lactis (strain IL1403)</name>
    <name type="common">Streptococcus lactis</name>
    <dbReference type="NCBI Taxonomy" id="272623"/>
    <lineage>
        <taxon>Bacteria</taxon>
        <taxon>Bacillati</taxon>
        <taxon>Bacillota</taxon>
        <taxon>Bacilli</taxon>
        <taxon>Lactobacillales</taxon>
        <taxon>Streptococcaceae</taxon>
        <taxon>Lactococcus</taxon>
    </lineage>
</organism>
<proteinExistence type="inferred from homology"/>
<dbReference type="EC" id="3.5.4.19"/>
<dbReference type="EC" id="3.6.1.31"/>
<dbReference type="EMBL" id="U92974">
    <property type="protein sequence ID" value="AAB81910.1"/>
    <property type="molecule type" value="Genomic_DNA"/>
</dbReference>
<dbReference type="EMBL" id="AE005176">
    <property type="protein sequence ID" value="AAK05313.1"/>
    <property type="molecule type" value="Genomic_DNA"/>
</dbReference>
<dbReference type="PIR" id="C47754">
    <property type="entry name" value="C47754"/>
</dbReference>
<dbReference type="PIR" id="G86776">
    <property type="entry name" value="G86776"/>
</dbReference>
<dbReference type="RefSeq" id="NP_267371.1">
    <property type="nucleotide sequence ID" value="NC_002662.1"/>
</dbReference>
<dbReference type="RefSeq" id="WP_003131119.1">
    <property type="nucleotide sequence ID" value="NC_002662.1"/>
</dbReference>
<dbReference type="SMR" id="Q02130"/>
<dbReference type="PaxDb" id="272623-L0072"/>
<dbReference type="EnsemblBacteria" id="AAK05313">
    <property type="protein sequence ID" value="AAK05313"/>
    <property type="gene ID" value="L0072"/>
</dbReference>
<dbReference type="KEGG" id="lla:L0072"/>
<dbReference type="PATRIC" id="fig|272623.7.peg.1312"/>
<dbReference type="eggNOG" id="COG0139">
    <property type="taxonomic scope" value="Bacteria"/>
</dbReference>
<dbReference type="eggNOG" id="COG0140">
    <property type="taxonomic scope" value="Bacteria"/>
</dbReference>
<dbReference type="HOGENOM" id="CLU_048577_3_1_9"/>
<dbReference type="OrthoDB" id="9795769at2"/>
<dbReference type="UniPathway" id="UPA00031">
    <property type="reaction ID" value="UER00007"/>
</dbReference>
<dbReference type="UniPathway" id="UPA00031">
    <property type="reaction ID" value="UER00008"/>
</dbReference>
<dbReference type="Proteomes" id="UP000002196">
    <property type="component" value="Chromosome"/>
</dbReference>
<dbReference type="GO" id="GO:0005737">
    <property type="term" value="C:cytoplasm"/>
    <property type="evidence" value="ECO:0007669"/>
    <property type="project" value="UniProtKB-SubCell"/>
</dbReference>
<dbReference type="GO" id="GO:0005524">
    <property type="term" value="F:ATP binding"/>
    <property type="evidence" value="ECO:0007669"/>
    <property type="project" value="UniProtKB-KW"/>
</dbReference>
<dbReference type="GO" id="GO:0004635">
    <property type="term" value="F:phosphoribosyl-AMP cyclohydrolase activity"/>
    <property type="evidence" value="ECO:0007669"/>
    <property type="project" value="UniProtKB-UniRule"/>
</dbReference>
<dbReference type="GO" id="GO:0004636">
    <property type="term" value="F:phosphoribosyl-ATP diphosphatase activity"/>
    <property type="evidence" value="ECO:0007669"/>
    <property type="project" value="UniProtKB-UniRule"/>
</dbReference>
<dbReference type="GO" id="GO:0000105">
    <property type="term" value="P:L-histidine biosynthetic process"/>
    <property type="evidence" value="ECO:0007669"/>
    <property type="project" value="UniProtKB-UniRule"/>
</dbReference>
<dbReference type="CDD" id="cd11534">
    <property type="entry name" value="NTP-PPase_HisIE_like"/>
    <property type="match status" value="1"/>
</dbReference>
<dbReference type="FunFam" id="3.10.20.810:FF:000001">
    <property type="entry name" value="Histidine biosynthesis bifunctional protein HisIE"/>
    <property type="match status" value="1"/>
</dbReference>
<dbReference type="Gene3D" id="1.10.287.1080">
    <property type="entry name" value="MazG-like"/>
    <property type="match status" value="1"/>
</dbReference>
<dbReference type="Gene3D" id="3.10.20.810">
    <property type="entry name" value="Phosphoribosyl-AMP cyclohydrolase"/>
    <property type="match status" value="1"/>
</dbReference>
<dbReference type="HAMAP" id="MF_01020">
    <property type="entry name" value="HisE"/>
    <property type="match status" value="1"/>
</dbReference>
<dbReference type="HAMAP" id="MF_01021">
    <property type="entry name" value="HisI"/>
    <property type="match status" value="1"/>
</dbReference>
<dbReference type="HAMAP" id="MF_01019">
    <property type="entry name" value="HisIE"/>
    <property type="match status" value="1"/>
</dbReference>
<dbReference type="InterPro" id="IPR023019">
    <property type="entry name" value="His_synth_HisIE"/>
</dbReference>
<dbReference type="InterPro" id="IPR008179">
    <property type="entry name" value="HisE"/>
</dbReference>
<dbReference type="InterPro" id="IPR026660">
    <property type="entry name" value="PRA-CH"/>
</dbReference>
<dbReference type="InterPro" id="IPR021130">
    <property type="entry name" value="PRib-ATP_PPHydrolase-like"/>
</dbReference>
<dbReference type="InterPro" id="IPR002496">
    <property type="entry name" value="PRib_AMP_CycHydrolase_dom"/>
</dbReference>
<dbReference type="InterPro" id="IPR038019">
    <property type="entry name" value="PRib_AMP_CycHydrolase_sf"/>
</dbReference>
<dbReference type="NCBIfam" id="TIGR03188">
    <property type="entry name" value="histidine_hisI"/>
    <property type="match status" value="1"/>
</dbReference>
<dbReference type="NCBIfam" id="NF000768">
    <property type="entry name" value="PRK00051.1"/>
    <property type="match status" value="1"/>
</dbReference>
<dbReference type="NCBIfam" id="NF002747">
    <property type="entry name" value="PRK02759.1"/>
    <property type="match status" value="1"/>
</dbReference>
<dbReference type="PANTHER" id="PTHR42945">
    <property type="entry name" value="HISTIDINE BIOSYNTHESIS BIFUNCTIONAL PROTEIN"/>
    <property type="match status" value="1"/>
</dbReference>
<dbReference type="PANTHER" id="PTHR42945:SF9">
    <property type="entry name" value="HISTIDINE BIOSYNTHESIS BIFUNCTIONAL PROTEIN HISIE"/>
    <property type="match status" value="1"/>
</dbReference>
<dbReference type="Pfam" id="PF01502">
    <property type="entry name" value="PRA-CH"/>
    <property type="match status" value="1"/>
</dbReference>
<dbReference type="Pfam" id="PF01503">
    <property type="entry name" value="PRA-PH"/>
    <property type="match status" value="1"/>
</dbReference>
<dbReference type="SUPFAM" id="SSF101386">
    <property type="entry name" value="all-alpha NTP pyrophosphatases"/>
    <property type="match status" value="1"/>
</dbReference>
<dbReference type="SUPFAM" id="SSF141734">
    <property type="entry name" value="HisI-like"/>
    <property type="match status" value="1"/>
</dbReference>
<protein>
    <recommendedName>
        <fullName>Histidine biosynthesis bifunctional protein HisIE</fullName>
    </recommendedName>
    <domain>
        <recommendedName>
            <fullName>Phosphoribosyl-AMP cyclohydrolase</fullName>
            <shortName>PRA-CH</shortName>
            <ecNumber>3.5.4.19</ecNumber>
        </recommendedName>
    </domain>
    <domain>
        <recommendedName>
            <fullName>Phosphoribosyl-ATP pyrophosphatase</fullName>
            <shortName>PRA-PH</shortName>
            <ecNumber>3.6.1.31</ecNumber>
        </recommendedName>
    </domain>
</protein>
<comment type="catalytic activity">
    <reaction>
        <text>1-(5-phospho-beta-D-ribosyl)-ATP + H2O = 1-(5-phospho-beta-D-ribosyl)-5'-AMP + diphosphate + H(+)</text>
        <dbReference type="Rhea" id="RHEA:22828"/>
        <dbReference type="ChEBI" id="CHEBI:15377"/>
        <dbReference type="ChEBI" id="CHEBI:15378"/>
        <dbReference type="ChEBI" id="CHEBI:33019"/>
        <dbReference type="ChEBI" id="CHEBI:59457"/>
        <dbReference type="ChEBI" id="CHEBI:73183"/>
        <dbReference type="EC" id="3.6.1.31"/>
    </reaction>
</comment>
<comment type="catalytic activity">
    <reaction>
        <text>1-(5-phospho-beta-D-ribosyl)-5'-AMP + H2O = 1-(5-phospho-beta-D-ribosyl)-5-[(5-phospho-beta-D-ribosylamino)methylideneamino]imidazole-4-carboxamide</text>
        <dbReference type="Rhea" id="RHEA:20049"/>
        <dbReference type="ChEBI" id="CHEBI:15377"/>
        <dbReference type="ChEBI" id="CHEBI:58435"/>
        <dbReference type="ChEBI" id="CHEBI:59457"/>
        <dbReference type="EC" id="3.5.4.19"/>
    </reaction>
</comment>
<comment type="pathway">
    <text>Amino-acid biosynthesis; L-histidine biosynthesis; L-histidine from 5-phospho-alpha-D-ribose 1-diphosphate: step 2/9.</text>
</comment>
<comment type="pathway">
    <text>Amino-acid biosynthesis; L-histidine biosynthesis; L-histidine from 5-phospho-alpha-D-ribose 1-diphosphate: step 3/9.</text>
</comment>
<comment type="subcellular location">
    <subcellularLocation>
        <location evidence="1">Cytoplasm</location>
    </subcellularLocation>
</comment>
<comment type="similarity">
    <text evidence="2">In the N-terminal section; belongs to the PRA-CH family.</text>
</comment>
<comment type="similarity">
    <text evidence="2">In the C-terminal section; belongs to the PRA-PH family.</text>
</comment>
<evidence type="ECO:0000250" key="1"/>
<evidence type="ECO:0000305" key="2"/>